<protein>
    <recommendedName>
        <fullName>Complement factor H</fullName>
    </recommendedName>
    <alternativeName>
        <fullName>Protein beta-1-H</fullName>
    </alternativeName>
</protein>
<dbReference type="EMBL" id="M12660">
    <property type="protein sequence ID" value="AAA37759.1"/>
    <property type="molecule type" value="mRNA"/>
</dbReference>
<dbReference type="EMBL" id="AC161408">
    <property type="status" value="NOT_ANNOTATED_CDS"/>
    <property type="molecule type" value="Genomic_DNA"/>
</dbReference>
<dbReference type="EMBL" id="BC066092">
    <property type="protein sequence ID" value="AAH66092.1"/>
    <property type="molecule type" value="mRNA"/>
</dbReference>
<dbReference type="EMBL" id="J02891">
    <property type="protein sequence ID" value="AAA37795.1"/>
    <property type="molecule type" value="mRNA"/>
</dbReference>
<dbReference type="EMBL" id="AH001909">
    <property type="protein sequence ID" value="AAA37762.1"/>
    <property type="molecule type" value="mRNA"/>
</dbReference>
<dbReference type="PIR" id="A26154">
    <property type="entry name" value="NBMSH"/>
</dbReference>
<dbReference type="RefSeq" id="NP_034018.2">
    <property type="nucleotide sequence ID" value="NM_009888.3"/>
</dbReference>
<dbReference type="PDB" id="2YBY">
    <property type="method" value="X-ray"/>
    <property type="resolution" value="1.58 A"/>
    <property type="chains" value="A=321-444"/>
</dbReference>
<dbReference type="PDBsum" id="2YBY"/>
<dbReference type="SMR" id="P06909"/>
<dbReference type="BioGRID" id="198682">
    <property type="interactions" value="1"/>
</dbReference>
<dbReference type="FunCoup" id="P06909">
    <property type="interactions" value="247"/>
</dbReference>
<dbReference type="STRING" id="10090.ENSMUSP00000107607"/>
<dbReference type="GlyConnect" id="817">
    <property type="glycosylation" value="2 N-Linked glycans (2 sites)"/>
</dbReference>
<dbReference type="GlyCosmos" id="P06909">
    <property type="glycosylation" value="7 sites, 8 glycans"/>
</dbReference>
<dbReference type="GlyGen" id="P06909">
    <property type="glycosylation" value="7 sites, 8 N-linked glycans (5 sites)"/>
</dbReference>
<dbReference type="iPTMnet" id="P06909"/>
<dbReference type="PhosphoSitePlus" id="P06909"/>
<dbReference type="SwissPalm" id="P06909"/>
<dbReference type="CPTAC" id="non-CPTAC-3900"/>
<dbReference type="CPTAC" id="non-CPTAC-5588"/>
<dbReference type="jPOST" id="P06909"/>
<dbReference type="PaxDb" id="10090-ENSMUSP00000107607"/>
<dbReference type="ProteomicsDB" id="281396"/>
<dbReference type="DNASU" id="12628"/>
<dbReference type="Ensembl" id="ENSMUST00000066859.13">
    <property type="protein sequence ID" value="ENSMUSP00000066677.7"/>
    <property type="gene ID" value="ENSMUSG00000026365.16"/>
</dbReference>
<dbReference type="GeneID" id="12628"/>
<dbReference type="KEGG" id="mmu:12628"/>
<dbReference type="AGR" id="MGI:88385"/>
<dbReference type="CTD" id="3075"/>
<dbReference type="MGI" id="MGI:88385">
    <property type="gene designation" value="Cfh"/>
</dbReference>
<dbReference type="VEuPathDB" id="HostDB:ENSMUSG00000026365"/>
<dbReference type="eggNOG" id="ENOG502QVSB">
    <property type="taxonomic scope" value="Eukaryota"/>
</dbReference>
<dbReference type="GeneTree" id="ENSGT00940000164315"/>
<dbReference type="HOGENOM" id="CLU_003511_0_0_1"/>
<dbReference type="InParanoid" id="P06909"/>
<dbReference type="OrthoDB" id="10051774at2759"/>
<dbReference type="Reactome" id="R-MMU-977606">
    <property type="pathway name" value="Regulation of Complement cascade"/>
</dbReference>
<dbReference type="BioGRID-ORCS" id="12628">
    <property type="hits" value="1 hit in 77 CRISPR screens"/>
</dbReference>
<dbReference type="ChiTaRS" id="Cfh">
    <property type="organism name" value="mouse"/>
</dbReference>
<dbReference type="EvolutionaryTrace" id="P06909"/>
<dbReference type="PRO" id="PR:P06909"/>
<dbReference type="Proteomes" id="UP000000589">
    <property type="component" value="Chromosome 1"/>
</dbReference>
<dbReference type="RNAct" id="P06909">
    <property type="molecule type" value="protein"/>
</dbReference>
<dbReference type="Bgee" id="ENSMUSG00000026365">
    <property type="expression patterns" value="Expressed in diaphysis of femur and 263 other cell types or tissues"/>
</dbReference>
<dbReference type="ExpressionAtlas" id="P06909">
    <property type="expression patterns" value="baseline and differential"/>
</dbReference>
<dbReference type="GO" id="GO:0030424">
    <property type="term" value="C:axon"/>
    <property type="evidence" value="ECO:0000314"/>
    <property type="project" value="MGI"/>
</dbReference>
<dbReference type="GO" id="GO:0009897">
    <property type="term" value="C:external side of plasma membrane"/>
    <property type="evidence" value="ECO:0000314"/>
    <property type="project" value="MGI"/>
</dbReference>
<dbReference type="GO" id="GO:0005576">
    <property type="term" value="C:extracellular region"/>
    <property type="evidence" value="ECO:0000314"/>
    <property type="project" value="MGI"/>
</dbReference>
<dbReference type="GO" id="GO:0005615">
    <property type="term" value="C:extracellular space"/>
    <property type="evidence" value="ECO:0000314"/>
    <property type="project" value="MGI"/>
</dbReference>
<dbReference type="GO" id="GO:0005739">
    <property type="term" value="C:mitochondrion"/>
    <property type="evidence" value="ECO:0007669"/>
    <property type="project" value="GOC"/>
</dbReference>
<dbReference type="GO" id="GO:0043025">
    <property type="term" value="C:neuronal cell body"/>
    <property type="evidence" value="ECO:0000314"/>
    <property type="project" value="MGI"/>
</dbReference>
<dbReference type="GO" id="GO:0001851">
    <property type="term" value="F:complement component C3b binding"/>
    <property type="evidence" value="ECO:0000353"/>
    <property type="project" value="MGI"/>
</dbReference>
<dbReference type="GO" id="GO:0008201">
    <property type="term" value="F:heparin binding"/>
    <property type="evidence" value="ECO:0000314"/>
    <property type="project" value="MGI"/>
</dbReference>
<dbReference type="GO" id="GO:0001905">
    <property type="term" value="P:activation of membrane attack complex"/>
    <property type="evidence" value="ECO:0000315"/>
    <property type="project" value="MGI"/>
</dbReference>
<dbReference type="GO" id="GO:0001525">
    <property type="term" value="P:angiogenesis"/>
    <property type="evidence" value="ECO:0000315"/>
    <property type="project" value="MGI"/>
</dbReference>
<dbReference type="GO" id="GO:0046034">
    <property type="term" value="P:ATP metabolic process"/>
    <property type="evidence" value="ECO:0000315"/>
    <property type="project" value="MGI"/>
</dbReference>
<dbReference type="GO" id="GO:0006956">
    <property type="term" value="P:complement activation"/>
    <property type="evidence" value="ECO:0000314"/>
    <property type="project" value="MGI"/>
</dbReference>
<dbReference type="GO" id="GO:0006957">
    <property type="term" value="P:complement activation, alternative pathway"/>
    <property type="evidence" value="ECO:0000315"/>
    <property type="project" value="MGI"/>
</dbReference>
<dbReference type="GO" id="GO:0008340">
    <property type="term" value="P:determination of adult lifespan"/>
    <property type="evidence" value="ECO:0000315"/>
    <property type="project" value="MGI"/>
</dbReference>
<dbReference type="GO" id="GO:0010467">
    <property type="term" value="P:gene expression"/>
    <property type="evidence" value="ECO:0000315"/>
    <property type="project" value="MGI"/>
</dbReference>
<dbReference type="GO" id="GO:0032835">
    <property type="term" value="P:glomerulus development"/>
    <property type="evidence" value="ECO:0000315"/>
    <property type="project" value="MGI"/>
</dbReference>
<dbReference type="GO" id="GO:0006955">
    <property type="term" value="P:immune response"/>
    <property type="evidence" value="ECO:0000315"/>
    <property type="project" value="MGI"/>
</dbReference>
<dbReference type="GO" id="GO:0006954">
    <property type="term" value="P:inflammatory response"/>
    <property type="evidence" value="ECO:0000315"/>
    <property type="project" value="MGI"/>
</dbReference>
<dbReference type="GO" id="GO:0001822">
    <property type="term" value="P:kidney development"/>
    <property type="evidence" value="ECO:0000315"/>
    <property type="project" value="MGI"/>
</dbReference>
<dbReference type="GO" id="GO:0032042">
    <property type="term" value="P:mitochondrial DNA metabolic process"/>
    <property type="evidence" value="ECO:0000315"/>
    <property type="project" value="MGI"/>
</dbReference>
<dbReference type="GO" id="GO:0140053">
    <property type="term" value="P:mitochondrial gene expression"/>
    <property type="evidence" value="ECO:0000315"/>
    <property type="project" value="MGI"/>
</dbReference>
<dbReference type="GO" id="GO:0007005">
    <property type="term" value="P:mitochondrion organization"/>
    <property type="evidence" value="ECO:0000315"/>
    <property type="project" value="MGI"/>
</dbReference>
<dbReference type="GO" id="GO:0070487">
    <property type="term" value="P:monocyte aggregation"/>
    <property type="evidence" value="ECO:0000315"/>
    <property type="project" value="MGI"/>
</dbReference>
<dbReference type="GO" id="GO:0050905">
    <property type="term" value="P:neuromuscular process"/>
    <property type="evidence" value="ECO:0000315"/>
    <property type="project" value="MGI"/>
</dbReference>
<dbReference type="GO" id="GO:0051640">
    <property type="term" value="P:organelle localization"/>
    <property type="evidence" value="ECO:0000315"/>
    <property type="project" value="MGI"/>
</dbReference>
<dbReference type="GO" id="GO:0046530">
    <property type="term" value="P:photoreceptor cell differentiation"/>
    <property type="evidence" value="ECO:0000315"/>
    <property type="project" value="MGI"/>
</dbReference>
<dbReference type="GO" id="GO:0070527">
    <property type="term" value="P:platelet aggregation"/>
    <property type="evidence" value="ECO:0000315"/>
    <property type="project" value="MGI"/>
</dbReference>
<dbReference type="GO" id="GO:0030449">
    <property type="term" value="P:regulation of complement activation"/>
    <property type="evidence" value="ECO:0000315"/>
    <property type="project" value="MGI"/>
</dbReference>
<dbReference type="GO" id="GO:1903659">
    <property type="term" value="P:regulation of complement-dependent cytotoxicity"/>
    <property type="evidence" value="ECO:0000266"/>
    <property type="project" value="MGI"/>
</dbReference>
<dbReference type="GO" id="GO:0034097">
    <property type="term" value="P:response to cytokine"/>
    <property type="evidence" value="ECO:0000314"/>
    <property type="project" value="MGI"/>
</dbReference>
<dbReference type="GO" id="GO:0002021">
    <property type="term" value="P:response to dietary excess"/>
    <property type="evidence" value="ECO:0000315"/>
    <property type="project" value="MGI"/>
</dbReference>
<dbReference type="GO" id="GO:0060041">
    <property type="term" value="P:retina development in camera-type eye"/>
    <property type="evidence" value="ECO:0000315"/>
    <property type="project" value="MGI"/>
</dbReference>
<dbReference type="GO" id="GO:0003406">
    <property type="term" value="P:retinal pigment epithelium development"/>
    <property type="evidence" value="ECO:0000315"/>
    <property type="project" value="MGI"/>
</dbReference>
<dbReference type="GO" id="GO:0046548">
    <property type="term" value="P:retinal rod cell development"/>
    <property type="evidence" value="ECO:0000315"/>
    <property type="project" value="MGI"/>
</dbReference>
<dbReference type="GO" id="GO:0035886">
    <property type="term" value="P:vascular associated smooth muscle cell differentiation"/>
    <property type="evidence" value="ECO:0000315"/>
    <property type="project" value="MGI"/>
</dbReference>
<dbReference type="GO" id="GO:0007601">
    <property type="term" value="P:visual perception"/>
    <property type="evidence" value="ECO:0000315"/>
    <property type="project" value="MGI"/>
</dbReference>
<dbReference type="CDD" id="cd00033">
    <property type="entry name" value="CCP"/>
    <property type="match status" value="16"/>
</dbReference>
<dbReference type="FunFam" id="2.10.70.10:FF:000041">
    <property type="entry name" value="Complement factor H"/>
    <property type="match status" value="2"/>
</dbReference>
<dbReference type="FunFam" id="2.10.70.10:FF:000130">
    <property type="entry name" value="Complement factor H"/>
    <property type="match status" value="1"/>
</dbReference>
<dbReference type="FunFam" id="2.10.70.10:FF:000026">
    <property type="entry name" value="Complement inhibitory factor H"/>
    <property type="match status" value="6"/>
</dbReference>
<dbReference type="FunFam" id="2.10.70.10:FF:000054">
    <property type="entry name" value="Complement inhibitory factor H"/>
    <property type="match status" value="1"/>
</dbReference>
<dbReference type="FunFam" id="2.10.70.10:FF:000060">
    <property type="entry name" value="Complement inhibitory factor H"/>
    <property type="match status" value="1"/>
</dbReference>
<dbReference type="FunFam" id="2.10.70.10:FF:000014">
    <property type="entry name" value="Membrane cofactor protein"/>
    <property type="match status" value="1"/>
</dbReference>
<dbReference type="Gene3D" id="2.10.70.10">
    <property type="entry name" value="Complement Module, domain 1"/>
    <property type="match status" value="20"/>
</dbReference>
<dbReference type="InterPro" id="IPR051503">
    <property type="entry name" value="ComplSys_Reg/VirEntry_Med"/>
</dbReference>
<dbReference type="InterPro" id="IPR035976">
    <property type="entry name" value="Sushi/SCR/CCP_sf"/>
</dbReference>
<dbReference type="InterPro" id="IPR000436">
    <property type="entry name" value="Sushi_SCR_CCP_dom"/>
</dbReference>
<dbReference type="PANTHER" id="PTHR45785:SF7">
    <property type="entry name" value="COMPLEMENT FACTOR H"/>
    <property type="match status" value="1"/>
</dbReference>
<dbReference type="PANTHER" id="PTHR45785">
    <property type="entry name" value="COMPLEMENT FACTOR H-RELATED"/>
    <property type="match status" value="1"/>
</dbReference>
<dbReference type="Pfam" id="PF00084">
    <property type="entry name" value="Sushi"/>
    <property type="match status" value="16"/>
</dbReference>
<dbReference type="SMART" id="SM00032">
    <property type="entry name" value="CCP"/>
    <property type="match status" value="20"/>
</dbReference>
<dbReference type="SUPFAM" id="SSF57535">
    <property type="entry name" value="Complement control module/SCR domain"/>
    <property type="match status" value="18"/>
</dbReference>
<dbReference type="PROSITE" id="PS50923">
    <property type="entry name" value="SUSHI"/>
    <property type="match status" value="18"/>
</dbReference>
<proteinExistence type="evidence at protein level"/>
<evidence type="ECO:0000250" key="1"/>
<evidence type="ECO:0000250" key="2">
    <source>
        <dbReference type="UniProtKB" id="P08603"/>
    </source>
</evidence>
<evidence type="ECO:0000255" key="3"/>
<evidence type="ECO:0000255" key="4">
    <source>
        <dbReference type="PROSITE-ProRule" id="PRU00302"/>
    </source>
</evidence>
<evidence type="ECO:0000256" key="5">
    <source>
        <dbReference type="SAM" id="MobiDB-lite"/>
    </source>
</evidence>
<evidence type="ECO:0000269" key="6">
    <source>
    </source>
</evidence>
<evidence type="ECO:0000269" key="7">
    <source>
    </source>
</evidence>
<evidence type="ECO:0000269" key="8">
    <source>
    </source>
</evidence>
<evidence type="ECO:0000305" key="9"/>
<evidence type="ECO:0007744" key="10">
    <source>
    </source>
</evidence>
<evidence type="ECO:0007744" key="11">
    <source>
    </source>
</evidence>
<evidence type="ECO:0007829" key="12">
    <source>
        <dbReference type="PDB" id="2YBY"/>
    </source>
</evidence>
<reference key="1">
    <citation type="journal article" date="1986" name="Proc. Natl. Acad. Sci. U.S.A.">
        <title>Murine protein H is comprised of 20 repeating units, 61 amino acids in length.</title>
        <authorList>
            <person name="Kristensen T."/>
            <person name="Tack B.F."/>
        </authorList>
    </citation>
    <scope>NUCLEOTIDE SEQUENCE [MRNA]</scope>
</reference>
<reference key="2">
    <citation type="journal article" date="2009" name="PLoS Biol.">
        <title>Lineage-specific biology revealed by a finished genome assembly of the mouse.</title>
        <authorList>
            <person name="Church D.M."/>
            <person name="Goodstadt L."/>
            <person name="Hillier L.W."/>
            <person name="Zody M.C."/>
            <person name="Goldstein S."/>
            <person name="She X."/>
            <person name="Bult C.J."/>
            <person name="Agarwala R."/>
            <person name="Cherry J.L."/>
            <person name="DiCuccio M."/>
            <person name="Hlavina W."/>
            <person name="Kapustin Y."/>
            <person name="Meric P."/>
            <person name="Maglott D."/>
            <person name="Birtle Z."/>
            <person name="Marques A.C."/>
            <person name="Graves T."/>
            <person name="Zhou S."/>
            <person name="Teague B."/>
            <person name="Potamousis K."/>
            <person name="Churas C."/>
            <person name="Place M."/>
            <person name="Herschleb J."/>
            <person name="Runnheim R."/>
            <person name="Forrest D."/>
            <person name="Amos-Landgraf J."/>
            <person name="Schwartz D.C."/>
            <person name="Cheng Z."/>
            <person name="Lindblad-Toh K."/>
            <person name="Eichler E.E."/>
            <person name="Ponting C.P."/>
        </authorList>
    </citation>
    <scope>NUCLEOTIDE SEQUENCE [LARGE SCALE GENOMIC DNA]</scope>
    <source>
        <strain>C57BL/6J</strain>
    </source>
</reference>
<reference key="3">
    <citation type="journal article" date="2004" name="Genome Res.">
        <title>The status, quality, and expansion of the NIH full-length cDNA project: the Mammalian Gene Collection (MGC).</title>
        <authorList>
            <consortium name="The MGC Project Team"/>
        </authorList>
    </citation>
    <scope>NUCLEOTIDE SEQUENCE [LARGE SCALE MRNA]</scope>
    <source>
        <strain>C57BL/6J</strain>
        <tissue>Brain</tissue>
    </source>
</reference>
<reference key="4">
    <citation type="journal article" date="1989" name="Biochemistry">
        <title>Analysis of complement factor H mRNA expression: dexamethasone and IFN-gamma increase the level of H in L cells.</title>
        <authorList>
            <person name="Munoz-Canoves P."/>
            <person name="Tack B.F."/>
            <person name="Vik D.P."/>
        </authorList>
    </citation>
    <scope>NUCLEOTIDE SEQUENCE [MRNA] OF 1-19</scope>
    <source>
        <strain>BALB/cJ</strain>
    </source>
</reference>
<reference key="5">
    <citation type="journal article" date="1990" name="J. Immunol.">
        <title>Demonstration of an unusual allelic variation of mouse factor H by the complete cDNA sequence of the H.2 allotype.</title>
        <authorList>
            <person name="Natsuume-Sakai S."/>
            <person name="Nonaka M."/>
            <person name="Nonaka M."/>
            <person name="Harada Y.N."/>
            <person name="Shreffler D.C."/>
            <person name="Moriwaki K."/>
        </authorList>
    </citation>
    <scope>NUCLEOTIDE SEQUENCE [MRNA] OF 1-18</scope>
</reference>
<reference key="6">
    <citation type="journal article" date="2006" name="J. Proteome Res.">
        <title>Proteome-wide characterization of N-glycosylation events by diagonal chromatography.</title>
        <authorList>
            <person name="Ghesquiere B."/>
            <person name="Van Damme J."/>
            <person name="Martens L."/>
            <person name="Vandekerckhove J."/>
            <person name="Gevaert K."/>
        </authorList>
    </citation>
    <scope>GLYCOSYLATION [LARGE SCALE ANALYSIS] AT ASN-773 AND ASN-1061</scope>
    <source>
        <strain>C57BL/6J</strain>
        <tissue>Plasma</tissue>
    </source>
</reference>
<reference key="7">
    <citation type="journal article" date="2007" name="J. Proteome Res.">
        <title>Enhanced analysis of the mouse plasma proteome using cysteine-containing tryptic glycopeptides.</title>
        <authorList>
            <person name="Bernhard O.K."/>
            <person name="Kapp E.A."/>
            <person name="Simpson R.J."/>
        </authorList>
    </citation>
    <scope>GLYCOSYLATION [LARGE SCALE ANALYSIS] AT ASN-773; ASN-801; ASN-1030; ASN-1061 AND ASN-1225</scope>
    <source>
        <strain>C57BL/6J</strain>
        <tissue>Plasma</tissue>
    </source>
</reference>
<reference key="8">
    <citation type="journal article" date="2007" name="Proc. Natl. Acad. Sci. U.S.A.">
        <title>Large-scale phosphorylation analysis of mouse liver.</title>
        <authorList>
            <person name="Villen J."/>
            <person name="Beausoleil S.A."/>
            <person name="Gerber S.A."/>
            <person name="Gygi S.P."/>
        </authorList>
    </citation>
    <scope>PHOSPHORYLATION [LARGE SCALE ANALYSIS] AT SER-1198</scope>
    <scope>IDENTIFICATION BY MASS SPECTROMETRY [LARGE SCALE ANALYSIS]</scope>
    <source>
        <tissue>Liver</tissue>
    </source>
</reference>
<reference key="9">
    <citation type="journal article" date="2010" name="Cell">
        <title>A tissue-specific atlas of mouse protein phosphorylation and expression.</title>
        <authorList>
            <person name="Huttlin E.L."/>
            <person name="Jedrychowski M.P."/>
            <person name="Elias J.E."/>
            <person name="Goswami T."/>
            <person name="Rad R."/>
            <person name="Beausoleil S.A."/>
            <person name="Villen J."/>
            <person name="Haas W."/>
            <person name="Sowa M.E."/>
            <person name="Gygi S.P."/>
        </authorList>
    </citation>
    <scope>PHOSPHORYLATION [LARGE SCALE ANALYSIS] AT SER-1198</scope>
    <scope>IDENTIFICATION BY MASS SPECTROMETRY [LARGE SCALE ANALYSIS]</scope>
    <source>
        <tissue>Brain</tissue>
        <tissue>Brown adipose tissue</tissue>
        <tissue>Heart</tissue>
        <tissue>Kidney</tissue>
        <tissue>Liver</tissue>
        <tissue>Lung</tissue>
        <tissue>Pancreas</tissue>
        <tissue>Spleen</tissue>
        <tissue>Testis</tissue>
    </source>
</reference>
<reference key="10">
    <citation type="journal article" date="2018" name="Immunobiology">
        <title>Absence of complement factor H alters bone architecture and dynamics.</title>
        <authorList>
            <person name="Alexander J.J."/>
            <person name="Sankaran J.S."/>
            <person name="Seldeen K.L."/>
            <person name="Thiyagarajan R."/>
            <person name="Jacob A."/>
            <person name="Quigg R.J."/>
            <person name="Troen B.R."/>
            <person name="Judex S."/>
        </authorList>
    </citation>
    <scope>DISRUPTION PHENOTYPE</scope>
</reference>
<reference key="11">
    <citation type="journal article" date="2012" name="PLoS Pathog.">
        <title>Design and evaluation of meningococcal vaccines through structure-based modification of host and pathogen molecules.</title>
        <authorList>
            <person name="Johnson S."/>
            <person name="Tan L."/>
            <person name="van der Veen S."/>
            <person name="Caesar J."/>
            <person name="Goicoechea De Jorge E."/>
            <person name="Harding R.J."/>
            <person name="Bai X."/>
            <person name="Exley R.M."/>
            <person name="Ward P.N."/>
            <person name="Ruivo N."/>
            <person name="Trivedi K."/>
            <person name="Cumber E."/>
            <person name="Jones R."/>
            <person name="Newham L."/>
            <person name="Staunton D."/>
            <person name="Ufret-Vincenty R."/>
            <person name="Borrow R."/>
            <person name="Pickering M.C."/>
            <person name="Lea S.M."/>
            <person name="Tang C.M."/>
        </authorList>
    </citation>
    <scope>X-RAY CRYSTALLOGRAPHY (1.58 ANGSTROMS) OF 321-444</scope>
</reference>
<gene>
    <name type="primary">Cfh</name>
    <name type="synonym">Hf1</name>
</gene>
<feature type="signal peptide" evidence="1">
    <location>
        <begin position="1"/>
        <end position="18"/>
    </location>
</feature>
<feature type="chain" id="PRO_0000005895" description="Complement factor H">
    <location>
        <begin position="19"/>
        <end position="1234"/>
    </location>
</feature>
<feature type="domain" description="Sushi 1" evidence="4">
    <location>
        <begin position="19"/>
        <end position="82"/>
    </location>
</feature>
<feature type="domain" description="Sushi 2" evidence="4">
    <location>
        <begin position="83"/>
        <end position="143"/>
    </location>
</feature>
<feature type="domain" description="Sushi 3" evidence="4">
    <location>
        <begin position="144"/>
        <end position="207"/>
    </location>
</feature>
<feature type="domain" description="Sushi 4" evidence="4">
    <location>
        <begin position="208"/>
        <end position="264"/>
    </location>
</feature>
<feature type="domain" description="Sushi 5" evidence="4">
    <location>
        <begin position="265"/>
        <end position="322"/>
    </location>
</feature>
<feature type="domain" description="Sushi 6" evidence="4">
    <location>
        <begin position="324"/>
        <end position="386"/>
    </location>
</feature>
<feature type="domain" description="Sushi 7" evidence="4">
    <location>
        <begin position="387"/>
        <end position="444"/>
    </location>
</feature>
<feature type="domain" description="Sushi 8" evidence="4">
    <location>
        <begin position="446"/>
        <end position="507"/>
    </location>
</feature>
<feature type="domain" description="Sushi 9" evidence="4">
    <location>
        <begin position="508"/>
        <end position="566"/>
    </location>
</feature>
<feature type="domain" description="Sushi 10" evidence="4">
    <location>
        <begin position="567"/>
        <end position="624"/>
    </location>
</feature>
<feature type="domain" description="Sushi 11" evidence="4">
    <location>
        <begin position="627"/>
        <end position="685"/>
    </location>
</feature>
<feature type="domain" description="Sushi 12" evidence="4">
    <location>
        <begin position="688"/>
        <end position="745"/>
    </location>
</feature>
<feature type="domain" description="Sushi 13" evidence="4">
    <location>
        <begin position="750"/>
        <end position="804"/>
    </location>
</feature>
<feature type="domain" description="Sushi 14" evidence="4">
    <location>
        <begin position="806"/>
        <end position="863"/>
    </location>
</feature>
<feature type="domain" description="Sushi 15" evidence="4">
    <location>
        <begin position="865"/>
        <end position="933"/>
    </location>
</feature>
<feature type="domain" description="Sushi 16" evidence="4">
    <location>
        <begin position="934"/>
        <end position="991"/>
    </location>
</feature>
<feature type="domain" description="Sushi 17" evidence="4">
    <location>
        <begin position="992"/>
        <end position="1050"/>
    </location>
</feature>
<feature type="domain" description="Sushi 18" evidence="4">
    <location>
        <begin position="1051"/>
        <end position="1109"/>
    </location>
</feature>
<feature type="domain" description="Sushi 19" evidence="4">
    <location>
        <begin position="1112"/>
        <end position="1170"/>
    </location>
</feature>
<feature type="domain" description="Sushi 20" evidence="4">
    <location>
        <begin position="1171"/>
        <end position="1234"/>
    </location>
</feature>
<feature type="region of interest" description="Disordered" evidence="5">
    <location>
        <begin position="872"/>
        <end position="896"/>
    </location>
</feature>
<feature type="compositionally biased region" description="Basic and acidic residues" evidence="5">
    <location>
        <begin position="883"/>
        <end position="896"/>
    </location>
</feature>
<feature type="modified residue" description="Phosphoserine" evidence="10 11">
    <location>
        <position position="1198"/>
    </location>
</feature>
<feature type="glycosylation site" description="N-linked (GlcNAc...) asparagine" evidence="3">
    <location>
        <position position="676"/>
    </location>
</feature>
<feature type="glycosylation site" description="N-linked (GlcNAc...) asparagine" evidence="3">
    <location>
        <position position="721"/>
    </location>
</feature>
<feature type="glycosylation site" description="N-linked (GlcNAc...) asparagine" evidence="6 7">
    <location>
        <position position="773"/>
    </location>
</feature>
<feature type="glycosylation site" description="N-linked (GlcNAc...) asparagine" evidence="7">
    <location>
        <position position="801"/>
    </location>
</feature>
<feature type="glycosylation site" description="N-linked (GlcNAc...) asparagine" evidence="7">
    <location>
        <position position="1030"/>
    </location>
</feature>
<feature type="glycosylation site" description="N-linked (GlcNAc...) asparagine" evidence="6 7">
    <location>
        <position position="1061"/>
    </location>
</feature>
<feature type="glycosylation site" description="N-linked (GlcNAc...) asparagine" evidence="7">
    <location>
        <position position="1225"/>
    </location>
</feature>
<feature type="disulfide bond" evidence="4">
    <location>
        <begin position="21"/>
        <end position="66"/>
    </location>
</feature>
<feature type="disulfide bond" evidence="4">
    <location>
        <begin position="52"/>
        <end position="80"/>
    </location>
</feature>
<feature type="disulfide bond" evidence="4">
    <location>
        <begin position="85"/>
        <end position="129"/>
    </location>
</feature>
<feature type="disulfide bond" evidence="4">
    <location>
        <begin position="114"/>
        <end position="141"/>
    </location>
</feature>
<feature type="disulfide bond" evidence="4">
    <location>
        <begin position="146"/>
        <end position="192"/>
    </location>
</feature>
<feature type="disulfide bond" evidence="4">
    <location>
        <begin position="178"/>
        <end position="205"/>
    </location>
</feature>
<feature type="disulfide bond" evidence="4">
    <location>
        <begin position="210"/>
        <end position="251"/>
    </location>
</feature>
<feature type="disulfide bond" evidence="4">
    <location>
        <begin position="237"/>
        <end position="262"/>
    </location>
</feature>
<feature type="disulfide bond" evidence="4">
    <location>
        <begin position="267"/>
        <end position="309"/>
    </location>
</feature>
<feature type="disulfide bond" evidence="4">
    <location>
        <begin position="294"/>
        <end position="320"/>
    </location>
</feature>
<feature type="disulfide bond" evidence="4">
    <location>
        <begin position="325"/>
        <end position="374"/>
    </location>
</feature>
<feature type="disulfide bond" evidence="4">
    <location>
        <begin position="357"/>
        <end position="385"/>
    </location>
</feature>
<feature type="disulfide bond" evidence="4">
    <location>
        <begin position="389"/>
        <end position="431"/>
    </location>
</feature>
<feature type="disulfide bond" evidence="4">
    <location>
        <begin position="416"/>
        <end position="442"/>
    </location>
</feature>
<feature type="disulfide bond" evidence="4">
    <location>
        <begin position="448"/>
        <end position="494"/>
    </location>
</feature>
<feature type="disulfide bond" evidence="4">
    <location>
        <begin position="477"/>
        <end position="505"/>
    </location>
</feature>
<feature type="disulfide bond" evidence="4">
    <location>
        <begin position="509"/>
        <end position="553"/>
    </location>
</feature>
<feature type="disulfide bond" evidence="4">
    <location>
        <begin position="536"/>
        <end position="564"/>
    </location>
</feature>
<feature type="disulfide bond" evidence="4">
    <location>
        <begin position="569"/>
        <end position="610"/>
    </location>
</feature>
<feature type="disulfide bond" evidence="4">
    <location>
        <begin position="597"/>
        <end position="622"/>
    </location>
</feature>
<feature type="disulfide bond" evidence="4">
    <location>
        <begin position="629"/>
        <end position="672"/>
    </location>
</feature>
<feature type="disulfide bond" evidence="4">
    <location>
        <begin position="658"/>
        <end position="683"/>
    </location>
</feature>
<feature type="disulfide bond" evidence="4">
    <location>
        <begin position="690"/>
        <end position="732"/>
    </location>
</feature>
<feature type="disulfide bond" evidence="4">
    <location>
        <begin position="718"/>
        <end position="743"/>
    </location>
</feature>
<feature type="disulfide bond" evidence="4">
    <location>
        <begin position="752"/>
        <end position="791"/>
    </location>
</feature>
<feature type="disulfide bond" evidence="4">
    <location>
        <begin position="780"/>
        <end position="802"/>
    </location>
</feature>
<feature type="disulfide bond" evidence="4">
    <location>
        <begin position="808"/>
        <end position="850"/>
    </location>
</feature>
<feature type="disulfide bond" evidence="4">
    <location>
        <begin position="836"/>
        <end position="861"/>
    </location>
</feature>
<feature type="disulfide bond" evidence="4">
    <location>
        <begin position="867"/>
        <end position="920"/>
    </location>
</feature>
<feature type="disulfide bond" evidence="4">
    <location>
        <begin position="906"/>
        <end position="931"/>
    </location>
</feature>
<feature type="disulfide bond" evidence="4">
    <location>
        <begin position="936"/>
        <end position="978"/>
    </location>
</feature>
<feature type="disulfide bond" evidence="4">
    <location>
        <begin position="964"/>
        <end position="989"/>
    </location>
</feature>
<feature type="disulfide bond" evidence="4">
    <location>
        <begin position="994"/>
        <end position="1037"/>
    </location>
</feature>
<feature type="disulfide bond" evidence="4">
    <location>
        <begin position="1023"/>
        <end position="1048"/>
    </location>
</feature>
<feature type="disulfide bond" evidence="4">
    <location>
        <begin position="1053"/>
        <end position="1096"/>
    </location>
</feature>
<feature type="disulfide bond" evidence="4">
    <location>
        <begin position="1082"/>
        <end position="1107"/>
    </location>
</feature>
<feature type="disulfide bond" evidence="4">
    <location>
        <begin position="1114"/>
        <end position="1157"/>
    </location>
</feature>
<feature type="disulfide bond" evidence="4">
    <location>
        <begin position="1143"/>
        <end position="1168"/>
    </location>
</feature>
<feature type="disulfide bond" evidence="4">
    <location>
        <begin position="1172"/>
        <end position="1223"/>
    </location>
</feature>
<feature type="disulfide bond" evidence="4">
    <location>
        <begin position="1206"/>
        <end position="1233"/>
    </location>
</feature>
<feature type="sequence conflict" description="In Ref. 1; AAA37759." evidence="9" ref="1">
    <original>R</original>
    <variation>T</variation>
    <location>
        <position position="1158"/>
    </location>
</feature>
<feature type="strand" evidence="12">
    <location>
        <begin position="333"/>
        <end position="335"/>
    </location>
</feature>
<feature type="helix" evidence="12">
    <location>
        <begin position="338"/>
        <end position="341"/>
    </location>
</feature>
<feature type="helix" evidence="12">
    <location>
        <begin position="342"/>
        <end position="344"/>
    </location>
</feature>
<feature type="strand" evidence="12">
    <location>
        <begin position="352"/>
        <end position="357"/>
    </location>
</feature>
<feature type="strand" evidence="12">
    <location>
        <begin position="370"/>
        <end position="375"/>
    </location>
</feature>
<feature type="strand" evidence="12">
    <location>
        <begin position="378"/>
        <end position="383"/>
    </location>
</feature>
<feature type="strand" evidence="12">
    <location>
        <begin position="386"/>
        <end position="391"/>
    </location>
</feature>
<feature type="strand" evidence="12">
    <location>
        <begin position="404"/>
        <end position="407"/>
    </location>
</feature>
<feature type="strand" evidence="12">
    <location>
        <begin position="411"/>
        <end position="413"/>
    </location>
</feature>
<feature type="strand" evidence="12">
    <location>
        <begin position="423"/>
        <end position="426"/>
    </location>
</feature>
<feature type="strand" evidence="12">
    <location>
        <begin position="428"/>
        <end position="432"/>
    </location>
</feature>
<feature type="strand" evidence="12">
    <location>
        <begin position="435"/>
        <end position="438"/>
    </location>
</feature>
<comment type="function">
    <text evidence="2">Glycoprotein that plays an essential role in maintaining a well-balanced immune response by modulating complement activation. Acts as a soluble inhibitor of complement, where its binding to self markers such as glycan structures prevents complement activation and amplification on cell surfaces. Accelerates the decay of the complement alternative pathway (AP) C3 convertase C3bBb, thus preventing local formation of more C3b, the central player of the complement amplification loop. As a cofactor of the serine protease factor I, CFH also regulates proteolytic degradation of already-deposited C3b. In addition, mediates several cellular responses through interaction with specific receptors. For example, interacts with CR3/ITGAM receptor and thereby mediates the adhesion of human neutrophils to different pathogens. In turn, these pathogens are phagocytosed and destroyed.</text>
</comment>
<comment type="subunit">
    <text evidence="2">Homodimer. Also forms homooligomers. Interacts with complement protein C3b; this interaction inhibits complement activation. Interacts with complement protein C3d. Interacts with CR3/ITGAM; this interaction mediates adhesion of neutrophils to pathogens leading to pathogen clearance.</text>
</comment>
<comment type="subcellular location">
    <subcellularLocation>
        <location evidence="2">Secreted</location>
    </subcellularLocation>
</comment>
<comment type="tissue specificity">
    <text evidence="2">CFH is one of the most abundant complement components in blood where the liver is the major source of CFH protein in vivo. in addition, CFH is secreted by additional cell types including monocytes, fibroblasts, or endothelial cells.</text>
</comment>
<comment type="domain">
    <text evidence="2">Sushi 1-3 domain represents the minimal unit capable of cofactor activity. The property to discriminate self surfaces from non-self surfaces depends on the C-terminal region made of Sushis 19-20.</text>
</comment>
<comment type="PTM">
    <text evidence="2">Sulfated on tyrosine residues.</text>
</comment>
<comment type="polymorphism">
    <text>Two codominant alleles of factor H are present in mice.</text>
</comment>
<comment type="disruption phenotype">
    <text evidence="8">The lack of CFH alters the microarchitecture of bone and affects osteoblast and osteoclast dynamics.</text>
</comment>
<organism>
    <name type="scientific">Mus musculus</name>
    <name type="common">Mouse</name>
    <dbReference type="NCBI Taxonomy" id="10090"/>
    <lineage>
        <taxon>Eukaryota</taxon>
        <taxon>Metazoa</taxon>
        <taxon>Chordata</taxon>
        <taxon>Craniata</taxon>
        <taxon>Vertebrata</taxon>
        <taxon>Euteleostomi</taxon>
        <taxon>Mammalia</taxon>
        <taxon>Eutheria</taxon>
        <taxon>Euarchontoglires</taxon>
        <taxon>Glires</taxon>
        <taxon>Rodentia</taxon>
        <taxon>Myomorpha</taxon>
        <taxon>Muroidea</taxon>
        <taxon>Muridae</taxon>
        <taxon>Murinae</taxon>
        <taxon>Mus</taxon>
        <taxon>Mus</taxon>
    </lineage>
</organism>
<sequence length="1234" mass="139138">MRLSARIIWLILWTVCAAEDCKGPPPRENSEILSGSWSEQLYPEGTQATYKCRPGYRTLGTIVKVCKNGKWVASNPSRICRKKPCGHPGDTPFGSFRLAVGSQFEFGAKVVYTCDDGYQLLGEIDYRECGADGWINDIPLCEVVKCLPVTELENGRIVSGAAETDQEYYFGQVVRFECNSGFKIEGHKEIHCSENGLWSNEKPRCVEILCTPPRVENGDGINVKPVYKENERYHYKCKHGYVPKERGDAVCTGSGWSSQPFCEEKRCSPPYILNGIYTPHRIIHRSDDEIRYECNYGFYPVTGSTVSKCTPTGWIPVPRCTLKPCEFPQFKYGRLYYEESLRPNFPVSIGNKYSYKCDNGFSPPSGYSWDYLRCTAQGWEPEVPCVRKCVFHYVENGDSAYWEKVYVQGQSLKVQCYNGYSLQNGQDTMTCTENGWSPPPKCIRIKTCSASDIHIDNGFLSESSSIYALNRETSYRCKQGYVTNTGEISGSITCLQNGWSPQPSCIKSCDMPVFENSITKNTRTWFKLNDKLDYECLVGFENEYKHTKGSITCTYYGWSDTPSCYERECSVPTLDRKLVVSPRKEKYRVGDLLEFSCHSGHRVGPDSVQCYHFGWSPGFPTCKGQVASCAPPLEILNGEINGAKKVEYSHGEVVKYDCKPRFLLKGPNKIQCVDGNWTTLPVCIEEERTCGDIPELEHGSAKCSVPPYHHGDSVEFICEENFTMIGHGSVSCISGKWTQLPKCVATDQLEKCRVLKSTGIEAIKPKLTEFTHNSTMDYKCRDKQEYERSICINGKWDPEPNCTSKTSCPPPPQIPNTQVIETTVKYLDGEKLSVLCQDNYLTQDSEEMVCKDGRWQSLPRCIEKIPCSQPPTIEHGSINLPRSSEERRDSIESSSHEHGTTFSYVCDDGFRIPEENRITCYMGKWSTPPRCVGLPCGPPPSIPLGTVSLELESYQHGEEVTYHCSTGFGIDGPAFIICEGGKWSDPPKCIKTDCDVLPTVKNAIIRGKSKKSYRTGEQVTFRCQSPYQMNGSDTVTCVNSRWIGQPVCKDNSCVDPPHVPNATIVTRTKNKYLHGDRVRYECNKPLELFGQVEVMCENGIWTEKPKCRDSTGKCGPPPPIDNGDITSLSLPVYEPLSSVEYQCQKYYLLKGKKTITCRNGKWSEPPTCLHACVIPENIMESHNIILKWRHTEKIYSHSGEDIEFGCKYGYYKARDSPPFRTKCINGTINYPTCV</sequence>
<accession>P06909</accession>
<accession>Q6NZK3</accession>
<name>CFAH_MOUSE</name>
<keyword id="KW-0002">3D-structure</keyword>
<keyword id="KW-0179">Complement alternate pathway</keyword>
<keyword id="KW-1015">Disulfide bond</keyword>
<keyword id="KW-0325">Glycoprotein</keyword>
<keyword id="KW-0391">Immunity</keyword>
<keyword id="KW-0399">Innate immunity</keyword>
<keyword id="KW-0597">Phosphoprotein</keyword>
<keyword id="KW-1185">Reference proteome</keyword>
<keyword id="KW-0677">Repeat</keyword>
<keyword id="KW-0964">Secreted</keyword>
<keyword id="KW-0732">Signal</keyword>
<keyword id="KW-0765">Sulfation</keyword>
<keyword id="KW-0768">Sushi</keyword>